<proteinExistence type="inferred from homology"/>
<comment type="function">
    <text evidence="1">Catalyzes the oxidation of erythronate-4-phosphate to 3-hydroxy-2-oxo-4-phosphonooxybutanoate.</text>
</comment>
<comment type="catalytic activity">
    <reaction evidence="1">
        <text>4-phospho-D-erythronate + NAD(+) = (R)-3-hydroxy-2-oxo-4-phosphooxybutanoate + NADH + H(+)</text>
        <dbReference type="Rhea" id="RHEA:18829"/>
        <dbReference type="ChEBI" id="CHEBI:15378"/>
        <dbReference type="ChEBI" id="CHEBI:57540"/>
        <dbReference type="ChEBI" id="CHEBI:57945"/>
        <dbReference type="ChEBI" id="CHEBI:58538"/>
        <dbReference type="ChEBI" id="CHEBI:58766"/>
        <dbReference type="EC" id="1.1.1.290"/>
    </reaction>
</comment>
<comment type="pathway">
    <text evidence="1">Cofactor biosynthesis; pyridoxine 5'-phosphate biosynthesis; pyridoxine 5'-phosphate from D-erythrose 4-phosphate: step 2/5.</text>
</comment>
<comment type="subunit">
    <text evidence="1">Homodimer.</text>
</comment>
<comment type="subcellular location">
    <subcellularLocation>
        <location evidence="1">Cytoplasm</location>
    </subcellularLocation>
</comment>
<comment type="similarity">
    <text evidence="1">Belongs to the D-isomer specific 2-hydroxyacid dehydrogenase family. PdxB subfamily.</text>
</comment>
<sequence length="378" mass="41331">MKILVDENMPYARELFSRLGEVQAVPGRPIPQAALDDADALMVRSVTQVNRDLLAGKNIRFVGTATAGTDHVDEDYLREAGVGFSAAPGCNAIAVVEYVFSALLMLAERDGFALTDRTVGIVGVGNVGSRLQARLEALGVRTLLCDPPRADRGDSGDFRTLDELVREADILTFHTPLFKEGPYKTLHLADEALIARLKPGAILINACRGPVVDNAALLARLEAGQPLSVVLDVWEPEPALNVELLKRVDIGTAHIAGYTLEGKARGTTQVFEAYSQFLGTPQQVALATLLPPPEFGRITLQGPLDQPTLKRLVHLVYDVRRDDAPLRRVAGMPGEFDKLRKNYQERREWSSLYVQCDDEAAAALLQKLGFNATHHPIR</sequence>
<gene>
    <name evidence="1" type="primary">pdxB</name>
    <name type="ordered locus">ESA_00896</name>
</gene>
<reference key="1">
    <citation type="journal article" date="2010" name="PLoS ONE">
        <title>Genome sequence of Cronobacter sakazakii BAA-894 and comparative genomic hybridization analysis with other Cronobacter species.</title>
        <authorList>
            <person name="Kucerova E."/>
            <person name="Clifton S.W."/>
            <person name="Xia X.Q."/>
            <person name="Long F."/>
            <person name="Porwollik S."/>
            <person name="Fulton L."/>
            <person name="Fronick C."/>
            <person name="Minx P."/>
            <person name="Kyung K."/>
            <person name="Warren W."/>
            <person name="Fulton R."/>
            <person name="Feng D."/>
            <person name="Wollam A."/>
            <person name="Shah N."/>
            <person name="Bhonagiri V."/>
            <person name="Nash W.E."/>
            <person name="Hallsworth-Pepin K."/>
            <person name="Wilson R.K."/>
            <person name="McClelland M."/>
            <person name="Forsythe S.J."/>
        </authorList>
    </citation>
    <scope>NUCLEOTIDE SEQUENCE [LARGE SCALE GENOMIC DNA]</scope>
    <source>
        <strain>ATCC BAA-894</strain>
    </source>
</reference>
<keyword id="KW-0963">Cytoplasm</keyword>
<keyword id="KW-0520">NAD</keyword>
<keyword id="KW-0560">Oxidoreductase</keyword>
<keyword id="KW-0664">Pyridoxine biosynthesis</keyword>
<keyword id="KW-1185">Reference proteome</keyword>
<dbReference type="EC" id="1.1.1.290" evidence="1"/>
<dbReference type="EMBL" id="CP000783">
    <property type="protein sequence ID" value="ABU76166.1"/>
    <property type="molecule type" value="Genomic_DNA"/>
</dbReference>
<dbReference type="RefSeq" id="WP_012124141.1">
    <property type="nucleotide sequence ID" value="NC_009778.1"/>
</dbReference>
<dbReference type="SMR" id="A7MH63"/>
<dbReference type="KEGG" id="esa:ESA_00896"/>
<dbReference type="PATRIC" id="fig|290339.8.peg.796"/>
<dbReference type="HOGENOM" id="CLU_019796_4_0_6"/>
<dbReference type="UniPathway" id="UPA00244">
    <property type="reaction ID" value="UER00310"/>
</dbReference>
<dbReference type="Proteomes" id="UP000000260">
    <property type="component" value="Chromosome"/>
</dbReference>
<dbReference type="GO" id="GO:0005829">
    <property type="term" value="C:cytosol"/>
    <property type="evidence" value="ECO:0007669"/>
    <property type="project" value="TreeGrafter"/>
</dbReference>
<dbReference type="GO" id="GO:0033711">
    <property type="term" value="F:4-phosphoerythronate dehydrogenase activity"/>
    <property type="evidence" value="ECO:0007669"/>
    <property type="project" value="UniProtKB-EC"/>
</dbReference>
<dbReference type="GO" id="GO:0051287">
    <property type="term" value="F:NAD binding"/>
    <property type="evidence" value="ECO:0007669"/>
    <property type="project" value="InterPro"/>
</dbReference>
<dbReference type="GO" id="GO:0046983">
    <property type="term" value="F:protein dimerization activity"/>
    <property type="evidence" value="ECO:0007669"/>
    <property type="project" value="InterPro"/>
</dbReference>
<dbReference type="GO" id="GO:0036001">
    <property type="term" value="P:'de novo' pyridoxal 5'-phosphate biosynthetic process"/>
    <property type="evidence" value="ECO:0007669"/>
    <property type="project" value="TreeGrafter"/>
</dbReference>
<dbReference type="GO" id="GO:0008615">
    <property type="term" value="P:pyridoxine biosynthetic process"/>
    <property type="evidence" value="ECO:0007669"/>
    <property type="project" value="UniProtKB-UniRule"/>
</dbReference>
<dbReference type="CDD" id="cd12158">
    <property type="entry name" value="ErythrP_dh"/>
    <property type="match status" value="1"/>
</dbReference>
<dbReference type="FunFam" id="3.30.1370.170:FF:000001">
    <property type="entry name" value="Erythronate-4-phosphate dehydrogenase"/>
    <property type="match status" value="1"/>
</dbReference>
<dbReference type="FunFam" id="3.40.50.720:FF:000093">
    <property type="entry name" value="Erythronate-4-phosphate dehydrogenase"/>
    <property type="match status" value="1"/>
</dbReference>
<dbReference type="Gene3D" id="3.30.1370.170">
    <property type="match status" value="1"/>
</dbReference>
<dbReference type="Gene3D" id="3.40.50.720">
    <property type="entry name" value="NAD(P)-binding Rossmann-like Domain"/>
    <property type="match status" value="2"/>
</dbReference>
<dbReference type="HAMAP" id="MF_01825">
    <property type="entry name" value="PdxB"/>
    <property type="match status" value="1"/>
</dbReference>
<dbReference type="InterPro" id="IPR006139">
    <property type="entry name" value="D-isomer_2_OHA_DH_cat_dom"/>
</dbReference>
<dbReference type="InterPro" id="IPR029753">
    <property type="entry name" value="D-isomer_DH_CS"/>
</dbReference>
<dbReference type="InterPro" id="IPR029752">
    <property type="entry name" value="D-isomer_DH_CS1"/>
</dbReference>
<dbReference type="InterPro" id="IPR006140">
    <property type="entry name" value="D-isomer_DH_NAD-bd"/>
</dbReference>
<dbReference type="InterPro" id="IPR020921">
    <property type="entry name" value="Erythronate-4-P_DHase"/>
</dbReference>
<dbReference type="InterPro" id="IPR024531">
    <property type="entry name" value="Erythronate-4-P_DHase_dimer"/>
</dbReference>
<dbReference type="InterPro" id="IPR036291">
    <property type="entry name" value="NAD(P)-bd_dom_sf"/>
</dbReference>
<dbReference type="InterPro" id="IPR038251">
    <property type="entry name" value="PdxB_dimer_sf"/>
</dbReference>
<dbReference type="NCBIfam" id="NF001309">
    <property type="entry name" value="PRK00257.1"/>
    <property type="match status" value="1"/>
</dbReference>
<dbReference type="NCBIfam" id="NF011966">
    <property type="entry name" value="PRK15438.1"/>
    <property type="match status" value="1"/>
</dbReference>
<dbReference type="PANTHER" id="PTHR42938">
    <property type="entry name" value="FORMATE DEHYDROGENASE 1"/>
    <property type="match status" value="1"/>
</dbReference>
<dbReference type="PANTHER" id="PTHR42938:SF9">
    <property type="entry name" value="FORMATE DEHYDROGENASE 1"/>
    <property type="match status" value="1"/>
</dbReference>
<dbReference type="Pfam" id="PF00389">
    <property type="entry name" value="2-Hacid_dh"/>
    <property type="match status" value="1"/>
</dbReference>
<dbReference type="Pfam" id="PF02826">
    <property type="entry name" value="2-Hacid_dh_C"/>
    <property type="match status" value="1"/>
</dbReference>
<dbReference type="Pfam" id="PF11890">
    <property type="entry name" value="DUF3410"/>
    <property type="match status" value="1"/>
</dbReference>
<dbReference type="SUPFAM" id="SSF52283">
    <property type="entry name" value="Formate/glycerate dehydrogenase catalytic domain-like"/>
    <property type="match status" value="1"/>
</dbReference>
<dbReference type="SUPFAM" id="SSF51735">
    <property type="entry name" value="NAD(P)-binding Rossmann-fold domains"/>
    <property type="match status" value="1"/>
</dbReference>
<dbReference type="PROSITE" id="PS00065">
    <property type="entry name" value="D_2_HYDROXYACID_DH_1"/>
    <property type="match status" value="1"/>
</dbReference>
<dbReference type="PROSITE" id="PS00671">
    <property type="entry name" value="D_2_HYDROXYACID_DH_3"/>
    <property type="match status" value="1"/>
</dbReference>
<feature type="chain" id="PRO_1000088421" description="Erythronate-4-phosphate dehydrogenase">
    <location>
        <begin position="1"/>
        <end position="378"/>
    </location>
</feature>
<feature type="active site" evidence="1">
    <location>
        <position position="208"/>
    </location>
</feature>
<feature type="active site" evidence="1">
    <location>
        <position position="237"/>
    </location>
</feature>
<feature type="active site" description="Proton donor" evidence="1">
    <location>
        <position position="254"/>
    </location>
</feature>
<feature type="binding site" evidence="1">
    <location>
        <position position="45"/>
    </location>
    <ligand>
        <name>substrate</name>
    </ligand>
</feature>
<feature type="binding site" evidence="1">
    <location>
        <position position="66"/>
    </location>
    <ligand>
        <name>substrate</name>
    </ligand>
</feature>
<feature type="binding site" evidence="1">
    <location>
        <position position="146"/>
    </location>
    <ligand>
        <name>NAD(+)</name>
        <dbReference type="ChEBI" id="CHEBI:57540"/>
    </ligand>
</feature>
<feature type="binding site" evidence="1">
    <location>
        <position position="175"/>
    </location>
    <ligand>
        <name>NAD(+)</name>
        <dbReference type="ChEBI" id="CHEBI:57540"/>
    </ligand>
</feature>
<feature type="binding site" evidence="1">
    <location>
        <position position="232"/>
    </location>
    <ligand>
        <name>NAD(+)</name>
        <dbReference type="ChEBI" id="CHEBI:57540"/>
    </ligand>
</feature>
<feature type="binding site" evidence="1">
    <location>
        <position position="257"/>
    </location>
    <ligand>
        <name>NAD(+)</name>
        <dbReference type="ChEBI" id="CHEBI:57540"/>
    </ligand>
</feature>
<feature type="binding site" evidence="1">
    <location>
        <position position="258"/>
    </location>
    <ligand>
        <name>substrate</name>
    </ligand>
</feature>
<evidence type="ECO:0000255" key="1">
    <source>
        <dbReference type="HAMAP-Rule" id="MF_01825"/>
    </source>
</evidence>
<accession>A7MH63</accession>
<protein>
    <recommendedName>
        <fullName evidence="1">Erythronate-4-phosphate dehydrogenase</fullName>
        <ecNumber evidence="1">1.1.1.290</ecNumber>
    </recommendedName>
</protein>
<organism>
    <name type="scientific">Cronobacter sakazakii (strain ATCC BAA-894)</name>
    <name type="common">Enterobacter sakazakii</name>
    <dbReference type="NCBI Taxonomy" id="290339"/>
    <lineage>
        <taxon>Bacteria</taxon>
        <taxon>Pseudomonadati</taxon>
        <taxon>Pseudomonadota</taxon>
        <taxon>Gammaproteobacteria</taxon>
        <taxon>Enterobacterales</taxon>
        <taxon>Enterobacteriaceae</taxon>
        <taxon>Cronobacter</taxon>
    </lineage>
</organism>
<name>PDXB_CROS8</name>